<name>THIC_METM6</name>
<gene>
    <name evidence="1" type="primary">thiC</name>
    <name type="ordered locus">MmarC6_0765</name>
</gene>
<organism>
    <name type="scientific">Methanococcus maripaludis (strain C6 / ATCC BAA-1332)</name>
    <dbReference type="NCBI Taxonomy" id="444158"/>
    <lineage>
        <taxon>Archaea</taxon>
        <taxon>Methanobacteriati</taxon>
        <taxon>Methanobacteriota</taxon>
        <taxon>Methanomada group</taxon>
        <taxon>Methanococci</taxon>
        <taxon>Methanococcales</taxon>
        <taxon>Methanococcaceae</taxon>
        <taxon>Methanococcus</taxon>
    </lineage>
</organism>
<evidence type="ECO:0000255" key="1">
    <source>
        <dbReference type="HAMAP-Rule" id="MF_00089"/>
    </source>
</evidence>
<accession>A9A8A9</accession>
<protein>
    <recommendedName>
        <fullName evidence="1">Phosphomethylpyrimidine synthase</fullName>
        <ecNumber evidence="1">4.1.99.17</ecNumber>
    </recommendedName>
    <alternativeName>
        <fullName evidence="1">Hydroxymethylpyrimidine phosphate synthase</fullName>
        <shortName evidence="1">HMP-P synthase</shortName>
        <shortName evidence="1">HMP-phosphate synthase</shortName>
        <shortName evidence="1">HMPP synthase</shortName>
    </alternativeName>
    <alternativeName>
        <fullName evidence="1">Thiamine biosynthesis protein ThiC</fullName>
    </alternativeName>
</protein>
<proteinExistence type="inferred from homology"/>
<comment type="function">
    <text evidence="1">Catalyzes the synthesis of the hydroxymethylpyrimidine phosphate (HMP-P) moiety of thiamine from aminoimidazole ribotide (AIR) in a radical S-adenosyl-L-methionine (SAM)-dependent reaction.</text>
</comment>
<comment type="catalytic activity">
    <reaction evidence="1">
        <text>5-amino-1-(5-phospho-beta-D-ribosyl)imidazole + S-adenosyl-L-methionine = 4-amino-2-methyl-5-(phosphooxymethyl)pyrimidine + CO + 5'-deoxyadenosine + formate + L-methionine + 3 H(+)</text>
        <dbReference type="Rhea" id="RHEA:24840"/>
        <dbReference type="ChEBI" id="CHEBI:15378"/>
        <dbReference type="ChEBI" id="CHEBI:15740"/>
        <dbReference type="ChEBI" id="CHEBI:17245"/>
        <dbReference type="ChEBI" id="CHEBI:17319"/>
        <dbReference type="ChEBI" id="CHEBI:57844"/>
        <dbReference type="ChEBI" id="CHEBI:58354"/>
        <dbReference type="ChEBI" id="CHEBI:59789"/>
        <dbReference type="ChEBI" id="CHEBI:137981"/>
        <dbReference type="EC" id="4.1.99.17"/>
    </reaction>
</comment>
<comment type="cofactor">
    <cofactor evidence="1">
        <name>[4Fe-4S] cluster</name>
        <dbReference type="ChEBI" id="CHEBI:49883"/>
    </cofactor>
    <text evidence="1">Binds 1 [4Fe-4S] cluster per subunit. The cluster is coordinated with 3 cysteines and an exchangeable S-adenosyl-L-methionine.</text>
</comment>
<comment type="pathway">
    <text evidence="1">Cofactor biosynthesis; thiamine diphosphate biosynthesis.</text>
</comment>
<comment type="similarity">
    <text evidence="1">Belongs to the ThiC family.</text>
</comment>
<dbReference type="EC" id="4.1.99.17" evidence="1"/>
<dbReference type="EMBL" id="CP000867">
    <property type="protein sequence ID" value="ABX01582.1"/>
    <property type="molecule type" value="Genomic_DNA"/>
</dbReference>
<dbReference type="SMR" id="A9A8A9"/>
<dbReference type="STRING" id="444158.MmarC6_0765"/>
<dbReference type="KEGG" id="mmx:MmarC6_0765"/>
<dbReference type="eggNOG" id="arCOG02741">
    <property type="taxonomic scope" value="Archaea"/>
</dbReference>
<dbReference type="HOGENOM" id="CLU_013181_2_2_2"/>
<dbReference type="OrthoDB" id="335406at2157"/>
<dbReference type="PhylomeDB" id="A9A8A9"/>
<dbReference type="UniPathway" id="UPA00060"/>
<dbReference type="GO" id="GO:0051539">
    <property type="term" value="F:4 iron, 4 sulfur cluster binding"/>
    <property type="evidence" value="ECO:0007669"/>
    <property type="project" value="UniProtKB-KW"/>
</dbReference>
<dbReference type="GO" id="GO:0016830">
    <property type="term" value="F:carbon-carbon lyase activity"/>
    <property type="evidence" value="ECO:0007669"/>
    <property type="project" value="InterPro"/>
</dbReference>
<dbReference type="GO" id="GO:0008270">
    <property type="term" value="F:zinc ion binding"/>
    <property type="evidence" value="ECO:0007669"/>
    <property type="project" value="UniProtKB-UniRule"/>
</dbReference>
<dbReference type="GO" id="GO:0009228">
    <property type="term" value="P:thiamine biosynthetic process"/>
    <property type="evidence" value="ECO:0007669"/>
    <property type="project" value="UniProtKB-KW"/>
</dbReference>
<dbReference type="GO" id="GO:0009229">
    <property type="term" value="P:thiamine diphosphate biosynthetic process"/>
    <property type="evidence" value="ECO:0007669"/>
    <property type="project" value="UniProtKB-UniRule"/>
</dbReference>
<dbReference type="FunFam" id="3.20.20.540:FF:000001">
    <property type="entry name" value="Phosphomethylpyrimidine synthase"/>
    <property type="match status" value="1"/>
</dbReference>
<dbReference type="Gene3D" id="3.20.20.540">
    <property type="entry name" value="Radical SAM ThiC family, central domain"/>
    <property type="match status" value="1"/>
</dbReference>
<dbReference type="HAMAP" id="MF_00089">
    <property type="entry name" value="ThiC"/>
    <property type="match status" value="1"/>
</dbReference>
<dbReference type="InterPro" id="IPR037509">
    <property type="entry name" value="ThiC"/>
</dbReference>
<dbReference type="InterPro" id="IPR038521">
    <property type="entry name" value="ThiC/Bza_core_dom"/>
</dbReference>
<dbReference type="InterPro" id="IPR002817">
    <property type="entry name" value="ThiC/BzaA/B"/>
</dbReference>
<dbReference type="NCBIfam" id="NF009895">
    <property type="entry name" value="PRK13352.1"/>
    <property type="match status" value="1"/>
</dbReference>
<dbReference type="NCBIfam" id="TIGR00190">
    <property type="entry name" value="thiC"/>
    <property type="match status" value="1"/>
</dbReference>
<dbReference type="PANTHER" id="PTHR30557:SF1">
    <property type="entry name" value="PHOSPHOMETHYLPYRIMIDINE SYNTHASE, CHLOROPLASTIC"/>
    <property type="match status" value="1"/>
</dbReference>
<dbReference type="PANTHER" id="PTHR30557">
    <property type="entry name" value="THIAMINE BIOSYNTHESIS PROTEIN THIC"/>
    <property type="match status" value="1"/>
</dbReference>
<dbReference type="Pfam" id="PF01964">
    <property type="entry name" value="ThiC_Rad_SAM"/>
    <property type="match status" value="1"/>
</dbReference>
<dbReference type="SFLD" id="SFLDF00407">
    <property type="entry name" value="phosphomethylpyrimidine_syntha"/>
    <property type="match status" value="1"/>
</dbReference>
<dbReference type="SFLD" id="SFLDG01114">
    <property type="entry name" value="phosphomethylpyrimidine_syntha"/>
    <property type="match status" value="1"/>
</dbReference>
<dbReference type="SFLD" id="SFLDS00113">
    <property type="entry name" value="Radical_SAM_Phosphomethylpyrim"/>
    <property type="match status" value="1"/>
</dbReference>
<feature type="chain" id="PRO_1000093214" description="Phosphomethylpyrimidine synthase">
    <location>
        <begin position="1"/>
        <end position="426"/>
    </location>
</feature>
<feature type="binding site" evidence="1">
    <location>
        <position position="65"/>
    </location>
    <ligand>
        <name>substrate</name>
    </ligand>
</feature>
<feature type="binding site" evidence="1">
    <location>
        <position position="94"/>
    </location>
    <ligand>
        <name>substrate</name>
    </ligand>
</feature>
<feature type="binding site" evidence="1">
    <location>
        <position position="123"/>
    </location>
    <ligand>
        <name>substrate</name>
    </ligand>
</feature>
<feature type="binding site" evidence="1">
    <location>
        <position position="162"/>
    </location>
    <ligand>
        <name>substrate</name>
    </ligand>
</feature>
<feature type="binding site" evidence="1">
    <location>
        <begin position="184"/>
        <end position="186"/>
    </location>
    <ligand>
        <name>substrate</name>
    </ligand>
</feature>
<feature type="binding site" evidence="1">
    <location>
        <begin position="225"/>
        <end position="228"/>
    </location>
    <ligand>
        <name>substrate</name>
    </ligand>
</feature>
<feature type="binding site" evidence="1">
    <location>
        <position position="264"/>
    </location>
    <ligand>
        <name>substrate</name>
    </ligand>
</feature>
<feature type="binding site" evidence="1">
    <location>
        <position position="268"/>
    </location>
    <ligand>
        <name>Zn(2+)</name>
        <dbReference type="ChEBI" id="CHEBI:29105"/>
    </ligand>
</feature>
<feature type="binding site" evidence="1">
    <location>
        <position position="291"/>
    </location>
    <ligand>
        <name>substrate</name>
    </ligand>
</feature>
<feature type="binding site" evidence="1">
    <location>
        <position position="332"/>
    </location>
    <ligand>
        <name>Zn(2+)</name>
        <dbReference type="ChEBI" id="CHEBI:29105"/>
    </ligand>
</feature>
<feature type="binding site" evidence="1">
    <location>
        <position position="408"/>
    </location>
    <ligand>
        <name>[4Fe-4S] cluster</name>
        <dbReference type="ChEBI" id="CHEBI:49883"/>
        <note>4Fe-4S-S-AdoMet</note>
    </ligand>
</feature>
<feature type="binding site" evidence="1">
    <location>
        <position position="411"/>
    </location>
    <ligand>
        <name>[4Fe-4S] cluster</name>
        <dbReference type="ChEBI" id="CHEBI:49883"/>
        <note>4Fe-4S-S-AdoMet</note>
    </ligand>
</feature>
<feature type="binding site" evidence="1">
    <location>
        <position position="415"/>
    </location>
    <ligand>
        <name>[4Fe-4S] cluster</name>
        <dbReference type="ChEBI" id="CHEBI:49883"/>
        <note>4Fe-4S-S-AdoMet</note>
    </ligand>
</feature>
<keyword id="KW-0004">4Fe-4S</keyword>
<keyword id="KW-0408">Iron</keyword>
<keyword id="KW-0411">Iron-sulfur</keyword>
<keyword id="KW-0456">Lyase</keyword>
<keyword id="KW-0479">Metal-binding</keyword>
<keyword id="KW-0949">S-adenosyl-L-methionine</keyword>
<keyword id="KW-0784">Thiamine biosynthesis</keyword>
<keyword id="KW-0862">Zinc</keyword>
<reference key="1">
    <citation type="submission" date="2007-10" db="EMBL/GenBank/DDBJ databases">
        <title>Complete sequence of Methanococcus maripaludis C6.</title>
        <authorList>
            <consortium name="US DOE Joint Genome Institute"/>
            <person name="Copeland A."/>
            <person name="Lucas S."/>
            <person name="Lapidus A."/>
            <person name="Barry K."/>
            <person name="Glavina del Rio T."/>
            <person name="Dalin E."/>
            <person name="Tice H."/>
            <person name="Pitluck S."/>
            <person name="Clum A."/>
            <person name="Schmutz J."/>
            <person name="Larimer F."/>
            <person name="Land M."/>
            <person name="Hauser L."/>
            <person name="Kyrpides N."/>
            <person name="Mikhailova N."/>
            <person name="Sieprawska-Lupa M."/>
            <person name="Whitman W.B."/>
            <person name="Richardson P."/>
        </authorList>
    </citation>
    <scope>NUCLEOTIDE SEQUENCE [LARGE SCALE GENOMIC DNA]</scope>
    <source>
        <strain>C6 / ATCC BAA-1332</strain>
    </source>
</reference>
<sequence length="426" mass="47129">MTQMTDAKSGITTEEMKFVAKEEGMDVETLKNLIAKGYVVIPKNVNRNTKPVGIGDNLRTKVNVNLGTSPDFIDIACELKKVEISNKYGADAIMDLSTGGNLPEIRKEIIKNTNLPIGTVPIYEVGADAKAKYGRVIDMDEDLIFNVIERQAKEGVDFMTLHCGITKQTVSVLNNDPRKMGVVSRGGAFLTAYIMYHDKENPLYKEFDYLLELLKEHDVTLSLGDGMRPGCLQDNTDRAQIQELITLGELVDKCREKGVQVMVEGPGHVPYNNIEANMKIQKTVCKNAPFYVLGPIVTDLAPGYDHITAAIGGTLAAVSGANFLCYVTPAEHVRLMKEDDVKEGLIASKIAAQAADVAKGHELAWKLEKKMADARMKHDWKKQFEIALDSDKPRKMREEIPSKDEKACSVCGDYCALLMVEELGKR</sequence>